<evidence type="ECO:0000255" key="1">
    <source>
        <dbReference type="HAMAP-Rule" id="MF_00435"/>
    </source>
</evidence>
<evidence type="ECO:0000255" key="2">
    <source>
        <dbReference type="PROSITE-ProRule" id="PRU01197"/>
    </source>
</evidence>
<evidence type="ECO:0000255" key="3">
    <source>
        <dbReference type="PROSITE-ProRule" id="PRU01198"/>
    </source>
</evidence>
<accession>C5C2I2</accession>
<sequence length="342" mass="36969">MAELFYDDDADLSVIQRKKVAVIGYGSQGHAHALNLRDSGVDVRVGLREGSASRAKAENEGLKVLTVPEAVKEADVVVILAPDQHQRGLYTADIEPNLNPGTTLVFGHGFNIRYGYIKPSADLDVVMVAPKGPGHLVRREYVDGRGVPVIVAVEQDATGGAWELALSYAKAIGGLRAAGIKTTFTEETETDLFGEQAVLCGGVSQLVQYGFETLTEAGYQPEVAYFEVLHELKLIVDLMYEGGIAKQRWSVSDTAEYGDYVSGPRVIDPRVKENMQAVLADVQNGAFAARFIADQDAGAPEFAELRAKGEAHPIEGVGRELRKLFAWVKPSDSDYTEGSAAR</sequence>
<reference key="1">
    <citation type="journal article" date="2009" name="Stand. Genomic Sci.">
        <title>Complete genome sequence of Beutenbergia cavernae type strain (HKI 0122).</title>
        <authorList>
            <person name="Land M."/>
            <person name="Pukall R."/>
            <person name="Abt B."/>
            <person name="Goker M."/>
            <person name="Rohde M."/>
            <person name="Glavina Del Rio T."/>
            <person name="Tice H."/>
            <person name="Copeland A."/>
            <person name="Cheng J.F."/>
            <person name="Lucas S."/>
            <person name="Chen F."/>
            <person name="Nolan M."/>
            <person name="Bruce D."/>
            <person name="Goodwin L."/>
            <person name="Pitluck S."/>
            <person name="Ivanova N."/>
            <person name="Mavromatis K."/>
            <person name="Ovchinnikova G."/>
            <person name="Pati A."/>
            <person name="Chen A."/>
            <person name="Palaniappan K."/>
            <person name="Hauser L."/>
            <person name="Chang Y.J."/>
            <person name="Jefferies C.C."/>
            <person name="Saunders E."/>
            <person name="Brettin T."/>
            <person name="Detter J.C."/>
            <person name="Han C."/>
            <person name="Chain P."/>
            <person name="Bristow J."/>
            <person name="Eisen J.A."/>
            <person name="Markowitz V."/>
            <person name="Hugenholtz P."/>
            <person name="Kyrpides N.C."/>
            <person name="Klenk H.P."/>
            <person name="Lapidus A."/>
        </authorList>
    </citation>
    <scope>NUCLEOTIDE SEQUENCE [LARGE SCALE GENOMIC DNA]</scope>
    <source>
        <strain>ATCC BAA-8 / DSM 12333 / CCUG 43141 / JCM 11478 / NBRC 16432 / NCIMB 13614 / HKI 0122</strain>
    </source>
</reference>
<keyword id="KW-0028">Amino-acid biosynthesis</keyword>
<keyword id="KW-0100">Branched-chain amino acid biosynthesis</keyword>
<keyword id="KW-0460">Magnesium</keyword>
<keyword id="KW-0479">Metal-binding</keyword>
<keyword id="KW-0521">NADP</keyword>
<keyword id="KW-0560">Oxidoreductase</keyword>
<keyword id="KW-1185">Reference proteome</keyword>
<proteinExistence type="inferred from homology"/>
<comment type="function">
    <text evidence="1">Involved in the biosynthesis of branched-chain amino acids (BCAA). Catalyzes an alkyl-migration followed by a ketol-acid reduction of (S)-2-acetolactate (S2AL) to yield (R)-2,3-dihydroxy-isovalerate. In the isomerase reaction, S2AL is rearranged via a Mg-dependent methyl migration to produce 3-hydroxy-3-methyl-2-ketobutyrate (HMKB). In the reductase reaction, this 2-ketoacid undergoes a metal-dependent reduction by NADPH to yield (R)-2,3-dihydroxy-isovalerate.</text>
</comment>
<comment type="catalytic activity">
    <reaction evidence="1">
        <text>(2R)-2,3-dihydroxy-3-methylbutanoate + NADP(+) = (2S)-2-acetolactate + NADPH + H(+)</text>
        <dbReference type="Rhea" id="RHEA:22068"/>
        <dbReference type="ChEBI" id="CHEBI:15378"/>
        <dbReference type="ChEBI" id="CHEBI:49072"/>
        <dbReference type="ChEBI" id="CHEBI:57783"/>
        <dbReference type="ChEBI" id="CHEBI:58349"/>
        <dbReference type="ChEBI" id="CHEBI:58476"/>
        <dbReference type="EC" id="1.1.1.86"/>
    </reaction>
</comment>
<comment type="catalytic activity">
    <reaction evidence="1">
        <text>(2R,3R)-2,3-dihydroxy-3-methylpentanoate + NADP(+) = (S)-2-ethyl-2-hydroxy-3-oxobutanoate + NADPH + H(+)</text>
        <dbReference type="Rhea" id="RHEA:13493"/>
        <dbReference type="ChEBI" id="CHEBI:15378"/>
        <dbReference type="ChEBI" id="CHEBI:49256"/>
        <dbReference type="ChEBI" id="CHEBI:49258"/>
        <dbReference type="ChEBI" id="CHEBI:57783"/>
        <dbReference type="ChEBI" id="CHEBI:58349"/>
        <dbReference type="EC" id="1.1.1.86"/>
    </reaction>
</comment>
<comment type="cofactor">
    <cofactor evidence="1">
        <name>Mg(2+)</name>
        <dbReference type="ChEBI" id="CHEBI:18420"/>
    </cofactor>
    <text evidence="1">Binds 2 magnesium ions per subunit.</text>
</comment>
<comment type="pathway">
    <text evidence="1">Amino-acid biosynthesis; L-isoleucine biosynthesis; L-isoleucine from 2-oxobutanoate: step 2/4.</text>
</comment>
<comment type="pathway">
    <text evidence="1">Amino-acid biosynthesis; L-valine biosynthesis; L-valine from pyruvate: step 2/4.</text>
</comment>
<comment type="similarity">
    <text evidence="1">Belongs to the ketol-acid reductoisomerase family.</text>
</comment>
<protein>
    <recommendedName>
        <fullName evidence="1">Ketol-acid reductoisomerase (NADP(+))</fullName>
        <shortName evidence="1">KARI</shortName>
        <ecNumber evidence="1">1.1.1.86</ecNumber>
    </recommendedName>
    <alternativeName>
        <fullName evidence="1">Acetohydroxy-acid isomeroreductase</fullName>
        <shortName evidence="1">AHIR</shortName>
    </alternativeName>
    <alternativeName>
        <fullName evidence="1">Alpha-keto-beta-hydroxylacyl reductoisomerase</fullName>
    </alternativeName>
    <alternativeName>
        <fullName evidence="1">Ketol-acid reductoisomerase type 1</fullName>
    </alternativeName>
    <alternativeName>
        <fullName evidence="1">Ketol-acid reductoisomerase type I</fullName>
    </alternativeName>
</protein>
<gene>
    <name evidence="1" type="primary">ilvC</name>
    <name type="ordered locus">Bcav_1410</name>
</gene>
<feature type="chain" id="PRO_1000206076" description="Ketol-acid reductoisomerase (NADP(+))">
    <location>
        <begin position="1"/>
        <end position="342"/>
    </location>
</feature>
<feature type="domain" description="KARI N-terminal Rossmann" evidence="2">
    <location>
        <begin position="2"/>
        <end position="182"/>
    </location>
</feature>
<feature type="domain" description="KARI C-terminal knotted" evidence="3">
    <location>
        <begin position="183"/>
        <end position="328"/>
    </location>
</feature>
<feature type="active site" evidence="1">
    <location>
        <position position="108"/>
    </location>
</feature>
<feature type="binding site" evidence="1">
    <location>
        <begin position="25"/>
        <end position="28"/>
    </location>
    <ligand>
        <name>NADP(+)</name>
        <dbReference type="ChEBI" id="CHEBI:58349"/>
    </ligand>
</feature>
<feature type="binding site" evidence="1">
    <location>
        <position position="48"/>
    </location>
    <ligand>
        <name>NADP(+)</name>
        <dbReference type="ChEBI" id="CHEBI:58349"/>
    </ligand>
</feature>
<feature type="binding site" evidence="1">
    <location>
        <position position="51"/>
    </location>
    <ligand>
        <name>NADP(+)</name>
        <dbReference type="ChEBI" id="CHEBI:58349"/>
    </ligand>
</feature>
<feature type="binding site" evidence="1">
    <location>
        <position position="53"/>
    </location>
    <ligand>
        <name>NADP(+)</name>
        <dbReference type="ChEBI" id="CHEBI:58349"/>
    </ligand>
</feature>
<feature type="binding site" evidence="1">
    <location>
        <begin position="83"/>
        <end position="86"/>
    </location>
    <ligand>
        <name>NADP(+)</name>
        <dbReference type="ChEBI" id="CHEBI:58349"/>
    </ligand>
</feature>
<feature type="binding site" evidence="1">
    <location>
        <position position="134"/>
    </location>
    <ligand>
        <name>NADP(+)</name>
        <dbReference type="ChEBI" id="CHEBI:58349"/>
    </ligand>
</feature>
<feature type="binding site" evidence="1">
    <location>
        <position position="191"/>
    </location>
    <ligand>
        <name>Mg(2+)</name>
        <dbReference type="ChEBI" id="CHEBI:18420"/>
        <label>1</label>
    </ligand>
</feature>
<feature type="binding site" evidence="1">
    <location>
        <position position="191"/>
    </location>
    <ligand>
        <name>Mg(2+)</name>
        <dbReference type="ChEBI" id="CHEBI:18420"/>
        <label>2</label>
    </ligand>
</feature>
<feature type="binding site" evidence="1">
    <location>
        <position position="195"/>
    </location>
    <ligand>
        <name>Mg(2+)</name>
        <dbReference type="ChEBI" id="CHEBI:18420"/>
        <label>1</label>
    </ligand>
</feature>
<feature type="binding site" evidence="1">
    <location>
        <position position="227"/>
    </location>
    <ligand>
        <name>Mg(2+)</name>
        <dbReference type="ChEBI" id="CHEBI:18420"/>
        <label>2</label>
    </ligand>
</feature>
<feature type="binding site" evidence="1">
    <location>
        <position position="231"/>
    </location>
    <ligand>
        <name>Mg(2+)</name>
        <dbReference type="ChEBI" id="CHEBI:18420"/>
        <label>2</label>
    </ligand>
</feature>
<feature type="binding site" evidence="1">
    <location>
        <position position="252"/>
    </location>
    <ligand>
        <name>substrate</name>
    </ligand>
</feature>
<dbReference type="EC" id="1.1.1.86" evidence="1"/>
<dbReference type="EMBL" id="CP001618">
    <property type="protein sequence ID" value="ACQ79668.1"/>
    <property type="molecule type" value="Genomic_DNA"/>
</dbReference>
<dbReference type="RefSeq" id="WP_015881908.1">
    <property type="nucleotide sequence ID" value="NC_012669.1"/>
</dbReference>
<dbReference type="SMR" id="C5C2I2"/>
<dbReference type="STRING" id="471853.Bcav_1410"/>
<dbReference type="KEGG" id="bcv:Bcav_1410"/>
<dbReference type="eggNOG" id="COG0059">
    <property type="taxonomic scope" value="Bacteria"/>
</dbReference>
<dbReference type="HOGENOM" id="CLU_033821_0_1_11"/>
<dbReference type="OrthoDB" id="9804088at2"/>
<dbReference type="UniPathway" id="UPA00047">
    <property type="reaction ID" value="UER00056"/>
</dbReference>
<dbReference type="UniPathway" id="UPA00049">
    <property type="reaction ID" value="UER00060"/>
</dbReference>
<dbReference type="Proteomes" id="UP000007962">
    <property type="component" value="Chromosome"/>
</dbReference>
<dbReference type="GO" id="GO:0005829">
    <property type="term" value="C:cytosol"/>
    <property type="evidence" value="ECO:0007669"/>
    <property type="project" value="TreeGrafter"/>
</dbReference>
<dbReference type="GO" id="GO:0004455">
    <property type="term" value="F:ketol-acid reductoisomerase activity"/>
    <property type="evidence" value="ECO:0007669"/>
    <property type="project" value="UniProtKB-UniRule"/>
</dbReference>
<dbReference type="GO" id="GO:0000287">
    <property type="term" value="F:magnesium ion binding"/>
    <property type="evidence" value="ECO:0007669"/>
    <property type="project" value="UniProtKB-UniRule"/>
</dbReference>
<dbReference type="GO" id="GO:0050661">
    <property type="term" value="F:NADP binding"/>
    <property type="evidence" value="ECO:0007669"/>
    <property type="project" value="InterPro"/>
</dbReference>
<dbReference type="GO" id="GO:0009097">
    <property type="term" value="P:isoleucine biosynthetic process"/>
    <property type="evidence" value="ECO:0007669"/>
    <property type="project" value="UniProtKB-UniRule"/>
</dbReference>
<dbReference type="GO" id="GO:0009099">
    <property type="term" value="P:L-valine biosynthetic process"/>
    <property type="evidence" value="ECO:0007669"/>
    <property type="project" value="UniProtKB-UniRule"/>
</dbReference>
<dbReference type="FunFam" id="3.40.50.720:FF:000023">
    <property type="entry name" value="Ketol-acid reductoisomerase (NADP(+))"/>
    <property type="match status" value="1"/>
</dbReference>
<dbReference type="Gene3D" id="6.10.240.10">
    <property type="match status" value="1"/>
</dbReference>
<dbReference type="Gene3D" id="3.40.50.720">
    <property type="entry name" value="NAD(P)-binding Rossmann-like Domain"/>
    <property type="match status" value="1"/>
</dbReference>
<dbReference type="HAMAP" id="MF_00435">
    <property type="entry name" value="IlvC"/>
    <property type="match status" value="1"/>
</dbReference>
<dbReference type="InterPro" id="IPR008927">
    <property type="entry name" value="6-PGluconate_DH-like_C_sf"/>
</dbReference>
<dbReference type="InterPro" id="IPR013023">
    <property type="entry name" value="KARI"/>
</dbReference>
<dbReference type="InterPro" id="IPR000506">
    <property type="entry name" value="KARI_C"/>
</dbReference>
<dbReference type="InterPro" id="IPR013116">
    <property type="entry name" value="KARI_N"/>
</dbReference>
<dbReference type="InterPro" id="IPR014359">
    <property type="entry name" value="KARI_prok"/>
</dbReference>
<dbReference type="InterPro" id="IPR036291">
    <property type="entry name" value="NAD(P)-bd_dom_sf"/>
</dbReference>
<dbReference type="NCBIfam" id="TIGR00465">
    <property type="entry name" value="ilvC"/>
    <property type="match status" value="1"/>
</dbReference>
<dbReference type="NCBIfam" id="NF004017">
    <property type="entry name" value="PRK05479.1"/>
    <property type="match status" value="1"/>
</dbReference>
<dbReference type="NCBIfam" id="NF009940">
    <property type="entry name" value="PRK13403.1"/>
    <property type="match status" value="1"/>
</dbReference>
<dbReference type="PANTHER" id="PTHR21371">
    <property type="entry name" value="KETOL-ACID REDUCTOISOMERASE, MITOCHONDRIAL"/>
    <property type="match status" value="1"/>
</dbReference>
<dbReference type="PANTHER" id="PTHR21371:SF1">
    <property type="entry name" value="KETOL-ACID REDUCTOISOMERASE, MITOCHONDRIAL"/>
    <property type="match status" value="1"/>
</dbReference>
<dbReference type="Pfam" id="PF01450">
    <property type="entry name" value="KARI_C"/>
    <property type="match status" value="1"/>
</dbReference>
<dbReference type="Pfam" id="PF07991">
    <property type="entry name" value="KARI_N"/>
    <property type="match status" value="1"/>
</dbReference>
<dbReference type="PIRSF" id="PIRSF000116">
    <property type="entry name" value="IlvC_gammaproteo"/>
    <property type="match status" value="1"/>
</dbReference>
<dbReference type="SUPFAM" id="SSF48179">
    <property type="entry name" value="6-phosphogluconate dehydrogenase C-terminal domain-like"/>
    <property type="match status" value="1"/>
</dbReference>
<dbReference type="SUPFAM" id="SSF51735">
    <property type="entry name" value="NAD(P)-binding Rossmann-fold domains"/>
    <property type="match status" value="1"/>
</dbReference>
<dbReference type="PROSITE" id="PS51851">
    <property type="entry name" value="KARI_C"/>
    <property type="match status" value="1"/>
</dbReference>
<dbReference type="PROSITE" id="PS51850">
    <property type="entry name" value="KARI_N"/>
    <property type="match status" value="1"/>
</dbReference>
<name>ILVC_BEUC1</name>
<organism>
    <name type="scientific">Beutenbergia cavernae (strain ATCC BAA-8 / DSM 12333 / CCUG 43141 / JCM 11478 / NBRC 16432 / NCIMB 13614 / HKI 0122)</name>
    <dbReference type="NCBI Taxonomy" id="471853"/>
    <lineage>
        <taxon>Bacteria</taxon>
        <taxon>Bacillati</taxon>
        <taxon>Actinomycetota</taxon>
        <taxon>Actinomycetes</taxon>
        <taxon>Micrococcales</taxon>
        <taxon>Beutenbergiaceae</taxon>
        <taxon>Beutenbergia</taxon>
    </lineage>
</organism>